<keyword id="KW-0025">Alternative splicing</keyword>
<keyword id="KW-0156">Chromatin regulator</keyword>
<keyword id="KW-0158">Chromosome</keyword>
<keyword id="KW-0238">DNA-binding</keyword>
<keyword id="KW-0479">Metal-binding</keyword>
<keyword id="KW-0489">Methyltransferase</keyword>
<keyword id="KW-0539">Nucleus</keyword>
<keyword id="KW-0597">Phosphoprotein</keyword>
<keyword id="KW-1185">Reference proteome</keyword>
<keyword id="KW-0677">Repeat</keyword>
<keyword id="KW-0949">S-adenosyl-L-methionine</keyword>
<keyword id="KW-0804">Transcription</keyword>
<keyword id="KW-0805">Transcription regulation</keyword>
<keyword id="KW-0808">Transferase</keyword>
<keyword id="KW-0862">Zinc</keyword>
<keyword id="KW-0863">Zinc-finger</keyword>
<proteinExistence type="evidence at protein level"/>
<accession>Q8BVE8</accession>
<accession>B3VCH6</accession>
<accession>Q6ZPY1</accession>
<accession>Q7TSF5</accession>
<accession>Q811F0</accession>
<name>NSD2_MOUSE</name>
<gene>
    <name type="primary">Nsd2</name>
    <name type="synonym">Kiaa1090</name>
    <name type="synonym">Whsc1</name>
</gene>
<feature type="chain" id="PRO_0000259520" description="Histone-lysine N-methyltransferase NSD2">
    <location>
        <begin position="1"/>
        <end position="1365"/>
    </location>
</feature>
<feature type="domain" description="PWWP 1" evidence="4">
    <location>
        <begin position="222"/>
        <end position="286"/>
    </location>
</feature>
<feature type="domain" description="PWWP 2" evidence="4">
    <location>
        <begin position="880"/>
        <end position="942"/>
    </location>
</feature>
<feature type="domain" description="AWS" evidence="7">
    <location>
        <begin position="1011"/>
        <end position="1061"/>
    </location>
</feature>
<feature type="domain" description="SET" evidence="5">
    <location>
        <begin position="1063"/>
        <end position="1180"/>
    </location>
</feature>
<feature type="domain" description="Post-SET" evidence="3">
    <location>
        <begin position="1187"/>
        <end position="1203"/>
    </location>
</feature>
<feature type="DNA-binding region" description="HMG box" evidence="6">
    <location>
        <begin position="453"/>
        <end position="521"/>
    </location>
</feature>
<feature type="zinc finger region" description="PHD-type 1" evidence="2">
    <location>
        <begin position="667"/>
        <end position="713"/>
    </location>
</feature>
<feature type="zinc finger region" description="PHD-type 2" evidence="2">
    <location>
        <begin position="714"/>
        <end position="770"/>
    </location>
</feature>
<feature type="zinc finger region" description="PHD-type 3" evidence="2">
    <location>
        <begin position="831"/>
        <end position="875"/>
    </location>
</feature>
<feature type="zinc finger region" description="PHD-type 4; atypical" evidence="2">
    <location>
        <begin position="1239"/>
        <end position="1286"/>
    </location>
</feature>
<feature type="region of interest" description="Disordered" evidence="8">
    <location>
        <begin position="149"/>
        <end position="169"/>
    </location>
</feature>
<feature type="region of interest" description="Disordered" evidence="8">
    <location>
        <begin position="373"/>
        <end position="455"/>
    </location>
</feature>
<feature type="region of interest" description="Disordered" evidence="8">
    <location>
        <begin position="513"/>
        <end position="567"/>
    </location>
</feature>
<feature type="region of interest" description="Disordered" evidence="8">
    <location>
        <begin position="594"/>
        <end position="658"/>
    </location>
</feature>
<feature type="region of interest" description="Disordered" evidence="8">
    <location>
        <begin position="1206"/>
        <end position="1232"/>
    </location>
</feature>
<feature type="region of interest" description="Disordered" evidence="8">
    <location>
        <begin position="1329"/>
        <end position="1365"/>
    </location>
</feature>
<feature type="compositionally biased region" description="Basic and acidic residues" evidence="8">
    <location>
        <begin position="552"/>
        <end position="567"/>
    </location>
</feature>
<feature type="compositionally biased region" description="Polar residues" evidence="8">
    <location>
        <begin position="603"/>
        <end position="623"/>
    </location>
</feature>
<feature type="compositionally biased region" description="Acidic residues" evidence="8">
    <location>
        <begin position="632"/>
        <end position="648"/>
    </location>
</feature>
<feature type="compositionally biased region" description="Basic residues" evidence="8">
    <location>
        <begin position="1219"/>
        <end position="1230"/>
    </location>
</feature>
<feature type="compositionally biased region" description="Basic residues" evidence="8">
    <location>
        <begin position="1348"/>
        <end position="1359"/>
    </location>
</feature>
<feature type="binding site" evidence="1">
    <location>
        <position position="1016"/>
    </location>
    <ligand>
        <name>Zn(2+)</name>
        <dbReference type="ChEBI" id="CHEBI:29105"/>
        <label>1</label>
    </ligand>
</feature>
<feature type="binding site" evidence="1">
    <location>
        <position position="1018"/>
    </location>
    <ligand>
        <name>Zn(2+)</name>
        <dbReference type="ChEBI" id="CHEBI:29105"/>
        <label>1</label>
    </ligand>
</feature>
<feature type="binding site" evidence="1">
    <location>
        <position position="1026"/>
    </location>
    <ligand>
        <name>Zn(2+)</name>
        <dbReference type="ChEBI" id="CHEBI:29105"/>
        <label>1</label>
    </ligand>
</feature>
<feature type="binding site" evidence="1">
    <location>
        <position position="1026"/>
    </location>
    <ligand>
        <name>Zn(2+)</name>
        <dbReference type="ChEBI" id="CHEBI:29105"/>
        <label>2</label>
    </ligand>
</feature>
<feature type="binding site" evidence="1">
    <location>
        <position position="1032"/>
    </location>
    <ligand>
        <name>Zn(2+)</name>
        <dbReference type="ChEBI" id="CHEBI:29105"/>
        <label>1</label>
    </ligand>
</feature>
<feature type="binding site" evidence="1">
    <location>
        <position position="1041"/>
    </location>
    <ligand>
        <name>Zn(2+)</name>
        <dbReference type="ChEBI" id="CHEBI:29105"/>
        <label>2</label>
    </ligand>
</feature>
<feature type="binding site" evidence="1">
    <location>
        <position position="1046"/>
    </location>
    <ligand>
        <name>Zn(2+)</name>
        <dbReference type="ChEBI" id="CHEBI:29105"/>
        <label>2</label>
    </ligand>
</feature>
<feature type="binding site" evidence="1">
    <location>
        <position position="1052"/>
    </location>
    <ligand>
        <name>Zn(2+)</name>
        <dbReference type="ChEBI" id="CHEBI:29105"/>
        <label>2</label>
    </ligand>
</feature>
<feature type="binding site" evidence="1">
    <location>
        <position position="1075"/>
    </location>
    <ligand>
        <name>S-adenosyl-L-methionine</name>
        <dbReference type="ChEBI" id="CHEBI:59789"/>
    </ligand>
</feature>
<feature type="binding site" evidence="1">
    <location>
        <begin position="1115"/>
        <end position="1118"/>
    </location>
    <ligand>
        <name>S-adenosyl-L-methionine</name>
        <dbReference type="ChEBI" id="CHEBI:59789"/>
    </ligand>
</feature>
<feature type="binding site" evidence="1">
    <location>
        <begin position="1141"/>
        <end position="1142"/>
    </location>
    <ligand>
        <name>S-adenosyl-L-methionine</name>
        <dbReference type="ChEBI" id="CHEBI:59789"/>
    </ligand>
</feature>
<feature type="binding site" evidence="1">
    <location>
        <position position="1144"/>
    </location>
    <ligand>
        <name>Zn(2+)</name>
        <dbReference type="ChEBI" id="CHEBI:29105"/>
        <label>3</label>
    </ligand>
</feature>
<feature type="binding site" evidence="1">
    <location>
        <position position="1186"/>
    </location>
    <ligand>
        <name>S-adenosyl-L-methionine</name>
        <dbReference type="ChEBI" id="CHEBI:59789"/>
    </ligand>
</feature>
<feature type="binding site" evidence="1">
    <location>
        <position position="1191"/>
    </location>
    <ligand>
        <name>Zn(2+)</name>
        <dbReference type="ChEBI" id="CHEBI:29105"/>
        <label>3</label>
    </ligand>
</feature>
<feature type="binding site" evidence="1">
    <location>
        <position position="1192"/>
    </location>
    <ligand>
        <name>S-adenosyl-L-methionine</name>
        <dbReference type="ChEBI" id="CHEBI:59789"/>
    </ligand>
</feature>
<feature type="binding site" evidence="1">
    <location>
        <position position="1193"/>
    </location>
    <ligand>
        <name>Zn(2+)</name>
        <dbReference type="ChEBI" id="CHEBI:29105"/>
        <label>3</label>
    </ligand>
</feature>
<feature type="binding site" evidence="1">
    <location>
        <position position="1198"/>
    </location>
    <ligand>
        <name>Zn(2+)</name>
        <dbReference type="ChEBI" id="CHEBI:29105"/>
        <label>3</label>
    </ligand>
</feature>
<feature type="modified residue" description="Phosphothreonine" evidence="19">
    <location>
        <position position="110"/>
    </location>
</feature>
<feature type="modified residue" description="Phosphothreonine" evidence="1">
    <location>
        <position position="114"/>
    </location>
</feature>
<feature type="modified residue" description="Phosphoserine" evidence="19">
    <location>
        <position position="121"/>
    </location>
</feature>
<feature type="modified residue" description="Phosphoserine" evidence="1">
    <location>
        <position position="172"/>
    </location>
</feature>
<feature type="modified residue" description="Phosphoserine" evidence="1">
    <location>
        <position position="376"/>
    </location>
</feature>
<feature type="modified residue" description="Phosphothreonine" evidence="1">
    <location>
        <position position="422"/>
    </location>
</feature>
<feature type="splice variant" id="VSP_044420" description="In isoform RE-IIBP." evidence="17">
    <location>
        <begin position="1"/>
        <end position="661"/>
    </location>
</feature>
<feature type="splice variant" id="VSP_021424" description="In isoform 3." evidence="15">
    <location>
        <begin position="1"/>
        <end position="519"/>
    </location>
</feature>
<feature type="splice variant" id="VSP_021425" description="In isoform 3." evidence="15">
    <original>NGN</original>
    <variation>MGM</variation>
    <location>
        <begin position="520"/>
        <end position="522"/>
    </location>
</feature>
<feature type="splice variant" id="VSP_021426" description="In isoform 2 and isoform 3." evidence="15 16">
    <original>K</original>
    <variation>KQ</variation>
    <location>
        <position position="558"/>
    </location>
</feature>
<feature type="mutagenesis site" description="Reduction in class switch recombination of the immunoglobulin heavy chain in B cells." evidence="11">
    <original>F</original>
    <variation>A</variation>
    <location>
        <position position="1117"/>
    </location>
</feature>
<feature type="mutagenesis site" description="No methyltransferase activity." evidence="9">
    <original>R</original>
    <variation>A</variation>
    <location>
        <position position="1138"/>
    </location>
</feature>
<feature type="mutagenesis site" description="No methyltransferase activity." evidence="10">
    <original>H</original>
    <variation>G</variation>
    <location>
        <position position="1142"/>
    </location>
</feature>
<feature type="mutagenesis site" description="No methyltransferase activity." evidence="9">
    <original>C</original>
    <variation>A</variation>
    <location>
        <position position="1144"/>
    </location>
</feature>
<feature type="sequence conflict" description="In Ref. 4; BAC37342." evidence="18" ref="4">
    <original>F</original>
    <variation>L</variation>
    <location>
        <position position="757"/>
    </location>
</feature>
<feature type="sequence conflict" description="In Ref. 1; ACE75882." evidence="18" ref="1">
    <original>K</original>
    <variation>T</variation>
    <location>
        <position position="1019"/>
    </location>
</feature>
<feature type="sequence conflict" description="In Ref. 5; AAH53454." evidence="18" ref="5">
    <original>S</original>
    <variation>L</variation>
    <location>
        <position position="1345"/>
    </location>
</feature>
<evidence type="ECO:0000250" key="1">
    <source>
        <dbReference type="UniProtKB" id="O96028"/>
    </source>
</evidence>
<evidence type="ECO:0000255" key="2">
    <source>
        <dbReference type="PROSITE-ProRule" id="PRU00146"/>
    </source>
</evidence>
<evidence type="ECO:0000255" key="3">
    <source>
        <dbReference type="PROSITE-ProRule" id="PRU00155"/>
    </source>
</evidence>
<evidence type="ECO:0000255" key="4">
    <source>
        <dbReference type="PROSITE-ProRule" id="PRU00162"/>
    </source>
</evidence>
<evidence type="ECO:0000255" key="5">
    <source>
        <dbReference type="PROSITE-ProRule" id="PRU00190"/>
    </source>
</evidence>
<evidence type="ECO:0000255" key="6">
    <source>
        <dbReference type="PROSITE-ProRule" id="PRU00267"/>
    </source>
</evidence>
<evidence type="ECO:0000255" key="7">
    <source>
        <dbReference type="PROSITE-ProRule" id="PRU00562"/>
    </source>
</evidence>
<evidence type="ECO:0000256" key="8">
    <source>
        <dbReference type="SAM" id="MobiDB-lite"/>
    </source>
</evidence>
<evidence type="ECO:0000269" key="9">
    <source>
    </source>
</evidence>
<evidence type="ECO:0000269" key="10">
    <source>
    </source>
</evidence>
<evidence type="ECO:0000269" key="11">
    <source>
    </source>
</evidence>
<evidence type="ECO:0000269" key="12">
    <source>
    </source>
</evidence>
<evidence type="ECO:0000269" key="13">
    <source>
    </source>
</evidence>
<evidence type="ECO:0000269" key="14">
    <source>
    </source>
</evidence>
<evidence type="ECO:0000303" key="15">
    <source>
    </source>
</evidence>
<evidence type="ECO:0000303" key="16">
    <source>
    </source>
</evidence>
<evidence type="ECO:0000303" key="17">
    <source>
    </source>
</evidence>
<evidence type="ECO:0000305" key="18"/>
<evidence type="ECO:0007744" key="19">
    <source>
    </source>
</evidence>
<organism>
    <name type="scientific">Mus musculus</name>
    <name type="common">Mouse</name>
    <dbReference type="NCBI Taxonomy" id="10090"/>
    <lineage>
        <taxon>Eukaryota</taxon>
        <taxon>Metazoa</taxon>
        <taxon>Chordata</taxon>
        <taxon>Craniata</taxon>
        <taxon>Vertebrata</taxon>
        <taxon>Euteleostomi</taxon>
        <taxon>Mammalia</taxon>
        <taxon>Eutheria</taxon>
        <taxon>Euarchontoglires</taxon>
        <taxon>Glires</taxon>
        <taxon>Rodentia</taxon>
        <taxon>Myomorpha</taxon>
        <taxon>Muroidea</taxon>
        <taxon>Muridae</taxon>
        <taxon>Murinae</taxon>
        <taxon>Mus</taxon>
        <taxon>Mus</taxon>
    </lineage>
</organism>
<comment type="function">
    <text evidence="1 10 11 12 13">Histone methyltransferase which specifically dimethylates nucleosomal histone H3 at 'Lys-36' (H3K36me2) (PubMed:19483677, PubMed:31636135, PubMed:32862441). Also monomethylates nucleosomal histone H3 at 'Lys-36' (H3K36me) in vitro (PubMed:19483677). Does not trimethylate nucleosomal histone H3 at 'Lys-36' (H3K36me3) (By similarity). However, specifically trimethylates histone H3 at 'Lys-36' (H3K36me3) at euchromatic regions in embryonic stem (ES) cells (PubMed:19483677). By methylating histone H3 at 'Lys-36', involved in the regulation of gene transcription during various biological processes (PubMed:19483677, PubMed:23241889, PubMed:31636135, PubMed:32862441). In ES cells, associates with developmental transcription factors such as SALL1 and represses inappropriate gene transcription mediated by histone deacetylation (PubMed:19483677). During heart development, associates with transcription factor NKX2-5 to repress transcription of NKX2-5 target genes (PubMed:19483677). Plays an essential role in adipogenesis, by regulating expression of genes involved in pre-adipocyte differentiation (By similarity). During T-cell receptor (TCR) and CD28-mediated T-cell activation, promotes the transcription of transcription factor BCL6 which is required for follicular helper T (Tfh) cell differentiation (PubMed:31636135). During B-cell development, required for the generation of the B1 lineage (PubMed:32862441). During B2 cell activation, may contribute to the control of isotype class switch recombination (CRS), splenic germinal center formation, and the humoral immune response (PubMed:32862441). Plays a role in class switch recombination of the immunoglobulin heavy chain (IgH) locus during B-cell activation (PubMed:23241889). By regulating the methylation of histone H3 at 'Lys-36' and histone H4 at 'Lys-20' at the IgH locus, involved in TP53BP1 recruitment to the IgH switch region and promotes the transcription of IgA (PubMed:23241889).</text>
</comment>
<comment type="function">
    <molecule>Isoform RE-IIBP</molecule>
    <text evidence="1 9">Histone methyltransferase which specifically dimethylates nucleosomal histone H3 at 'Lys-36' (H3K36me2) (By similarity). Mono-, di- and tri-methylates histone H3 at 'Lys-27' (H3K27me, H3K27me2, H3K27me3) (PubMed:18172012). Methylation of histone H3 at 'Lys-27' is controversial (By similarity). May act as a transcription regulator that binds DNA and suppresses IL5 transcription through HDAC recruitment (PubMed:18172012).</text>
</comment>
<comment type="catalytic activity">
    <reaction evidence="10">
        <text>L-lysyl(36)-[histone H3] + S-adenosyl-L-methionine = N(6)-methyl-L-lysyl(36)-[histone H3] + S-adenosyl-L-homocysteine + H(+)</text>
        <dbReference type="Rhea" id="RHEA:60312"/>
        <dbReference type="Rhea" id="RHEA-COMP:9785"/>
        <dbReference type="Rhea" id="RHEA-COMP:9786"/>
        <dbReference type="ChEBI" id="CHEBI:15378"/>
        <dbReference type="ChEBI" id="CHEBI:29969"/>
        <dbReference type="ChEBI" id="CHEBI:57856"/>
        <dbReference type="ChEBI" id="CHEBI:59789"/>
        <dbReference type="ChEBI" id="CHEBI:61929"/>
    </reaction>
</comment>
<comment type="catalytic activity">
    <reaction evidence="10 12 13">
        <text>L-lysyl(36)-[histone H3] + 2 S-adenosyl-L-methionine = N(6),N(6)-dimethyl-L-lysyl(36)-[histone H3] + 2 S-adenosyl-L-homocysteine + 2 H(+)</text>
        <dbReference type="Rhea" id="RHEA:60308"/>
        <dbReference type="Rhea" id="RHEA-COMP:9785"/>
        <dbReference type="Rhea" id="RHEA-COMP:9787"/>
        <dbReference type="ChEBI" id="CHEBI:15378"/>
        <dbReference type="ChEBI" id="CHEBI:29969"/>
        <dbReference type="ChEBI" id="CHEBI:57856"/>
        <dbReference type="ChEBI" id="CHEBI:59789"/>
        <dbReference type="ChEBI" id="CHEBI:61976"/>
        <dbReference type="EC" id="2.1.1.357"/>
    </reaction>
</comment>
<comment type="subunit">
    <text evidence="10">Interacts with HDAC1 (PubMed:19483677). Interacts (via PHD-type zinc fingers 1, 2 and 3) with SALL1 (PubMed:19483677). Interacts (via PHD-type 1, 2 and 3) with SALL4 (PubMed:19483677). Interacts with NANOG (PubMed:19483677). Interacts with OGT (PubMed:19483677). Interacts (via HMG box) with NKX2-5 (PubMed:19483677).</text>
</comment>
<comment type="interaction">
    <interactant intactId="EBI-11518042">
        <id>Q8BVE8-2</id>
    </interactant>
    <interactant intactId="EBI-297021">
        <id>P42582</id>
        <label>Nkx2-5</label>
    </interactant>
    <organismsDiffer>false</organismsDiffer>
    <experiments>2</experiments>
</comment>
<comment type="interaction">
    <interactant intactId="EBI-11518042">
        <id>Q8BVE8-2</id>
    </interactant>
    <interactant intactId="EBI-2312582">
        <id>Q8BX22</id>
        <label>Sall4</label>
    </interactant>
    <organismsDiffer>false</organismsDiffer>
    <experiments>3</experiments>
</comment>
<comment type="subcellular location">
    <subcellularLocation>
        <location evidence="6 10">Nucleus</location>
    </subcellularLocation>
    <subcellularLocation>
        <location evidence="10 11">Chromosome</location>
    </subcellularLocation>
    <text evidence="10 11">In embryonic stem (ES) cells, localizes to small foci, probably corresponding to euchromatin (PubMed:19483677). In B-cells, localizes to Ig heavy chain switch region during class switch recombination (PubMed:23241889).</text>
</comment>
<comment type="alternative products">
    <event type="alternative splicing"/>
    <isoform>
        <id>Q8BVE8-1</id>
        <name>1</name>
        <sequence type="displayed"/>
    </isoform>
    <isoform>
        <id>Q8BVE8-2</id>
        <name>2</name>
        <sequence type="described" ref="VSP_021426"/>
    </isoform>
    <isoform>
        <id>Q8BVE8-3</id>
        <name>3</name>
        <sequence type="described" ref="VSP_021424 VSP_021425 VSP_021426"/>
    </isoform>
    <isoform>
        <id>Q8BVE8-4</id>
        <name evidence="17">RE-IIBP</name>
        <sequence type="described" ref="VSP_044420"/>
    </isoform>
</comment>
<comment type="tissue specificity">
    <text evidence="13">During B-cell development, expressed in early B2 cell progenitors (pre- and pro-B cells) with a decrease in expression at later stages.</text>
</comment>
<comment type="developmental stage">
    <text evidence="10 14">Ubiquitously expressed in early development (PubMed:9618163). Highly expressed in neuroepithelium at 10.5 dpc, and in the forebrain, midbrain, frontal facial region, jaw, heart but not in the endocardial cushion, and cartilage primordial at 14.5 dpc (PubMed:19483677).</text>
</comment>
<comment type="induction">
    <text evidence="12 13">Induced in CD4(+) T-cell in response to T-cell receptor (TCR) and CD28 stimulation (at protein level) (PubMed:31636135). Induced in B2-cells by IgM antibodies or lipopolysaccharide (LPS) stimulation (PubMed:32862441).</text>
</comment>
<comment type="disruption phenotype">
    <text evidence="10 12">Offspring number is low at birth (PubMed:19483677). After birth, pups have growth retardation and die within 10 days (PubMed:19483677). At 15.5 dpc, levels of trimethylated 'Lys-36' on histone H3 are reduced (PubMed:19483677). At 18.5 dpc, embryos are smaller with midline fusion defects due to a lack of ossification centers and some have cleft palates (PubMed:19483677). They also have heart defects including atrial and ventricular septal defects (PubMed:19483677). Conditional knockout in CD4(+) T-cells, reduces dimethylation of histone H3 at 'Lys-36' at the Bcl6 gene locus in response to T-cell activation which results in impaired Bcl6 expresseion (PubMed:31636135). Following immunization with ovalbumin antigen or sheep red blood cells, or infection with LCMV virus, follicular helper T (Tfh) cell differentiation and germinal center B cell response are reduced (PubMed:31636135). Also, following infection with LCMV virus, clearance of the virus is delayed (PubMed:31636135). No defect in T-cell development (PubMed:31636135).</text>
</comment>
<comment type="similarity">
    <text evidence="5">Belongs to the class V-like SAM-binding methyltransferase superfamily. Histone-lysine methyltransferase family. SET2 subfamily.</text>
</comment>
<comment type="caution">
    <text evidence="1">Depending on the experimental set up and substrate used, NSD2 has been shown to mono-, di- or tri-methylate 'Lys-27', 'Lys-36' or 'Lys-79' of histone H3 and 'Lys-20' or 'Lys-44' of histone H4 (By similarity). However, dimethylation of nucleosomal histone H3 at 'Lys-36' (H3K36me2) is likely to be the physiological reaction catalyzed by NSD2 (By similarity).</text>
</comment>
<comment type="sequence caution" evidence="18">
    <conflict type="miscellaneous discrepancy">
        <sequence resource="EMBL-CDS" id="ACE75882"/>
    </conflict>
    <text>Incorrectly indicated as originating from human.</text>
</comment>
<comment type="sequence caution" evidence="18">
    <conflict type="frameshift">
        <sequence resource="EMBL-CDS" id="BAC37342"/>
    </conflict>
</comment>
<comment type="sequence caution" evidence="18">
    <conflict type="erroneous initiation">
        <sequence resource="EMBL-CDS" id="BAC98097"/>
    </conflict>
</comment>
<protein>
    <recommendedName>
        <fullName>Histone-lysine N-methyltransferase NSD2</fullName>
        <ecNumber evidence="10 12 13">2.1.1.357</ecNumber>
    </recommendedName>
    <alternativeName>
        <fullName>Multiple myeloma SET domain-containing protein</fullName>
        <shortName>MMSET</shortName>
    </alternativeName>
    <alternativeName>
        <fullName>Nuclear SET domain-containing protein 2</fullName>
    </alternativeName>
    <alternativeName>
        <fullName>Wolf-Hirschhorn syndrome candidate 1 protein homolog</fullName>
    </alternativeName>
</protein>
<sequence length="1365" mass="152253">MEFSIRKSPLSVQKVVKCMKMKQTPEILGSANGKTQNCEVNHECSVFLSKAQLSNSLQEGVMQKFNGHDALPFLPAEKLKDLTSCVFNGEPGAHDTKLCFEAQEVKGIGTPPNTTPIKNGSPEIKLKITKTYMNGKPLFESSICGDGAADVSQSEENEQKSDNKTRRNRKRSIKYDSLLEQGLVEAALVSKISSPADKKIPVKKESCPNTGRDRDLLLKYNVGDLVWSKVSGYPWWPCMVSADPLLHNHTKLKGQKKSARQYHVQFFGDAPERAWIFEKSLVAFEGEEQFEKLCQESAKQAPTKAEKIKLLKPISGRLRAQWEMGIVQAEEAASMSIEERKAKFTFLYVGDQLHLNPQVAKEAGIVTEPLGEMVDSSGASEEAAVDPGSVREEDIPTKRRRRTKRSSSAENQEGDPGTDKSTPPKMAEAEPKRGVGSPAGRKKSTGSAPRSRKGDSAAQFLVFCQKHRDEVVAEHPDASGEEIEELLGSQWSMLNEKQKARYNTKFSLMISAQSEEDSGNGNGKKRSHTKRADDPAEDVDVEDAPRKRLRADKHSLRKRETITDKTARTSSYKAIEAASSLKSQAATKNLSDACKPLKKRNRASATASSALGFNKSSSPSASLTEHEVSDSPGDEPSESPYESADETQTEASVSSKKSERGMAAKKEYVCQLCEKTGSLLLCEGPCCGAFHLACLGLSRRPEGRFTCTECASGIHSCFVCKESKMEVKRCVVNQCGKFYHEACVKKYPLTVFESRGFRCPLHSCMSCHASNPSNPRPSKGKMMRCVRCPVAYHGGDACLAAGCSVIASNSIICTGHFTARKGKRHHTHVNVSWCFVCSKGGSLLCCEACPAAFHPDCLNIEMPDGSWFCNDCRAGKKLHFQDIIWVKLGNYRWWPAEVCHPKNVPPNIQKMKHEIGEFPVFFFGSKDYYWTHQARVFPYMEGDRGSRYQGVRGIGRVFKNALQEAEARFNEVKLQREARETQESERKPPPYKHIKVNKPYGKVQIYTADISEIPKCNCKPTDENPCGSDSECLNRMLMFECHPQVCPAGEYCQNQCFTKRQYPETKIIKTDGKGWGLVAKRDIRKGEFVNEYVGELIDEEECMARIKYAHENDITHFYMLTIDKDRIIDAGPKGNYSRFMNHSCQPNCETLKWTVNGDTRVGLFAVCDIPAGTELTFNYNLDCLGNEKTVCRCGASNCSGFLGDRPKTSASLSSEEKGKKAKKKTRRRRAKGEGKRQSEDECFRCGDGGQLVLCDRKFCTKAYHLSCLGLGKRPFGKWECPWHHCDVCGKPSTSFCHLCPNSFCKEHQDGTAFRSTQDGQSYCCEHDLRADSSSSTKTEKPFPESLKSKGKRKKRRCWRRVTDGK</sequence>
<dbReference type="EC" id="2.1.1.357" evidence="10 12 13"/>
<dbReference type="EMBL" id="EU733655">
    <property type="protein sequence ID" value="ACE75882.1"/>
    <property type="status" value="ALT_SEQ"/>
    <property type="molecule type" value="mRNA"/>
</dbReference>
<dbReference type="EMBL" id="AK129287">
    <property type="protein sequence ID" value="BAC98097.1"/>
    <property type="status" value="ALT_INIT"/>
    <property type="molecule type" value="mRNA"/>
</dbReference>
<dbReference type="EMBL" id="AC163329">
    <property type="status" value="NOT_ANNOTATED_CDS"/>
    <property type="molecule type" value="Genomic_DNA"/>
</dbReference>
<dbReference type="EMBL" id="AK078622">
    <property type="protein sequence ID" value="BAC37342.1"/>
    <property type="status" value="ALT_FRAME"/>
    <property type="molecule type" value="mRNA"/>
</dbReference>
<dbReference type="EMBL" id="BC046473">
    <property type="protein sequence ID" value="AAH46473.1"/>
    <property type="molecule type" value="mRNA"/>
</dbReference>
<dbReference type="EMBL" id="BC053454">
    <property type="protein sequence ID" value="AAH53454.1"/>
    <property type="molecule type" value="mRNA"/>
</dbReference>
<dbReference type="CCDS" id="CCDS51467.1">
    <molecule id="Q8BVE8-2"/>
</dbReference>
<dbReference type="CCDS" id="CCDS51468.1">
    <molecule id="Q8BVE8-1"/>
</dbReference>
<dbReference type="RefSeq" id="NP_001074571.2">
    <molecule id="Q8BVE8-2"/>
    <property type="nucleotide sequence ID" value="NM_001081102.2"/>
</dbReference>
<dbReference type="RefSeq" id="NP_780440.2">
    <molecule id="Q8BVE8-1"/>
    <property type="nucleotide sequence ID" value="NM_175231.2"/>
</dbReference>
<dbReference type="RefSeq" id="XP_006503721.1">
    <molecule id="Q8BVE8-2"/>
    <property type="nucleotide sequence ID" value="XM_006503658.5"/>
</dbReference>
<dbReference type="RefSeq" id="XP_006503722.1">
    <molecule id="Q8BVE8-2"/>
    <property type="nucleotide sequence ID" value="XM_006503659.5"/>
</dbReference>
<dbReference type="RefSeq" id="XP_006503723.1">
    <molecule id="Q8BVE8-1"/>
    <property type="nucleotide sequence ID" value="XM_006503660.5"/>
</dbReference>
<dbReference type="RefSeq" id="XP_017176079.1">
    <property type="nucleotide sequence ID" value="XM_017320590.1"/>
</dbReference>
<dbReference type="RefSeq" id="XP_030109896.1">
    <molecule id="Q8BVE8-1"/>
    <property type="nucleotide sequence ID" value="XM_030254036.2"/>
</dbReference>
<dbReference type="SMR" id="Q8BVE8"/>
<dbReference type="BioGRID" id="223605">
    <property type="interactions" value="16"/>
</dbReference>
<dbReference type="DIP" id="DIP-60452N"/>
<dbReference type="FunCoup" id="Q8BVE8">
    <property type="interactions" value="4290"/>
</dbReference>
<dbReference type="IntAct" id="Q8BVE8">
    <property type="interactions" value="14"/>
</dbReference>
<dbReference type="MINT" id="Q8BVE8"/>
<dbReference type="STRING" id="10090.ENSMUSP00000075210"/>
<dbReference type="GlyGen" id="Q8BVE8">
    <property type="glycosylation" value="1 site, 1 O-linked glycan (1 site)"/>
</dbReference>
<dbReference type="iPTMnet" id="Q8BVE8"/>
<dbReference type="PhosphoSitePlus" id="Q8BVE8"/>
<dbReference type="SwissPalm" id="Q8BVE8"/>
<dbReference type="jPOST" id="Q8BVE8"/>
<dbReference type="PaxDb" id="10090-ENSMUSP00000058940"/>
<dbReference type="PeptideAtlas" id="Q8BVE8"/>
<dbReference type="ProteomicsDB" id="293976">
    <molecule id="Q8BVE8-1"/>
</dbReference>
<dbReference type="ProteomicsDB" id="293977">
    <molecule id="Q8BVE8-2"/>
</dbReference>
<dbReference type="ProteomicsDB" id="293978">
    <molecule id="Q8BVE8-3"/>
</dbReference>
<dbReference type="ProteomicsDB" id="293979">
    <molecule id="Q8BVE8-4"/>
</dbReference>
<dbReference type="Pumba" id="Q8BVE8"/>
<dbReference type="ABCD" id="Q8BVE8">
    <property type="antibodies" value="1 sequenced antibody"/>
</dbReference>
<dbReference type="Antibodypedia" id="8608">
    <property type="antibodies" value="191 antibodies from 31 providers"/>
</dbReference>
<dbReference type="Ensembl" id="ENSMUST00000058096.14">
    <molecule id="Q8BVE8-1"/>
    <property type="protein sequence ID" value="ENSMUSP00000058940.8"/>
    <property type="gene ID" value="ENSMUSG00000057406.17"/>
</dbReference>
<dbReference type="Ensembl" id="ENSMUST00000066854.14">
    <molecule id="Q8BVE8-2"/>
    <property type="protein sequence ID" value="ENSMUSP00000067205.8"/>
    <property type="gene ID" value="ENSMUSG00000057406.17"/>
</dbReference>
<dbReference type="Ensembl" id="ENSMUST00000075812.11">
    <molecule id="Q8BVE8-2"/>
    <property type="protein sequence ID" value="ENSMUSP00000075210.5"/>
    <property type="gene ID" value="ENSMUSG00000057406.17"/>
</dbReference>
<dbReference type="GeneID" id="107823"/>
<dbReference type="KEGG" id="mmu:107823"/>
<dbReference type="UCSC" id="uc008xbm.2">
    <molecule id="Q8BVE8-1"/>
    <property type="organism name" value="mouse"/>
</dbReference>
<dbReference type="UCSC" id="uc012duw.1">
    <molecule id="Q8BVE8-2"/>
    <property type="organism name" value="mouse"/>
</dbReference>
<dbReference type="AGR" id="MGI:1276574"/>
<dbReference type="CTD" id="7468"/>
<dbReference type="MGI" id="MGI:1276574">
    <property type="gene designation" value="Nsd2"/>
</dbReference>
<dbReference type="VEuPathDB" id="HostDB:ENSMUSG00000057406"/>
<dbReference type="eggNOG" id="KOG1081">
    <property type="taxonomic scope" value="Eukaryota"/>
</dbReference>
<dbReference type="GeneTree" id="ENSGT00940000157429"/>
<dbReference type="HOGENOM" id="CLU_004494_2_1_1"/>
<dbReference type="InParanoid" id="Q8BVE8"/>
<dbReference type="OMA" id="SHIICPA"/>
<dbReference type="OrthoDB" id="14911at9989"/>
<dbReference type="PhylomeDB" id="Q8BVE8"/>
<dbReference type="TreeFam" id="TF329088"/>
<dbReference type="BRENDA" id="2.1.1.357">
    <property type="organism ID" value="3474"/>
</dbReference>
<dbReference type="BRENDA" id="2.1.1.359">
    <property type="organism ID" value="3474"/>
</dbReference>
<dbReference type="Reactome" id="R-MMU-3214841">
    <property type="pathway name" value="PKMTs methylate histone lysines"/>
</dbReference>
<dbReference type="Reactome" id="R-MMU-5693565">
    <property type="pathway name" value="Recruitment and ATM-mediated phosphorylation of repair and signaling proteins at DNA double strand breaks"/>
</dbReference>
<dbReference type="Reactome" id="R-MMU-5693571">
    <property type="pathway name" value="Nonhomologous End-Joining (NHEJ)"/>
</dbReference>
<dbReference type="Reactome" id="R-MMU-5693607">
    <property type="pathway name" value="Processing of DNA double-strand break ends"/>
</dbReference>
<dbReference type="Reactome" id="R-MMU-69473">
    <property type="pathway name" value="G2/M DNA damage checkpoint"/>
</dbReference>
<dbReference type="BioGRID-ORCS" id="107823">
    <property type="hits" value="11 hits in 118 CRISPR screens"/>
</dbReference>
<dbReference type="ChiTaRS" id="Whsc1">
    <property type="organism name" value="mouse"/>
</dbReference>
<dbReference type="PRO" id="PR:Q8BVE8"/>
<dbReference type="Proteomes" id="UP000000589">
    <property type="component" value="Chromosome 5"/>
</dbReference>
<dbReference type="RNAct" id="Q8BVE8">
    <property type="molecule type" value="protein"/>
</dbReference>
<dbReference type="Bgee" id="ENSMUSG00000057406">
    <property type="expression patterns" value="Expressed in manus and 249 other cell types or tissues"/>
</dbReference>
<dbReference type="ExpressionAtlas" id="Q8BVE8">
    <property type="expression patterns" value="baseline and differential"/>
</dbReference>
<dbReference type="GO" id="GO:0005694">
    <property type="term" value="C:chromosome"/>
    <property type="evidence" value="ECO:0007669"/>
    <property type="project" value="UniProtKB-SubCell"/>
</dbReference>
<dbReference type="GO" id="GO:0005730">
    <property type="term" value="C:nucleolus"/>
    <property type="evidence" value="ECO:0007669"/>
    <property type="project" value="Ensembl"/>
</dbReference>
<dbReference type="GO" id="GO:0005654">
    <property type="term" value="C:nucleoplasm"/>
    <property type="evidence" value="ECO:0007669"/>
    <property type="project" value="Ensembl"/>
</dbReference>
<dbReference type="GO" id="GO:0005634">
    <property type="term" value="C:nucleus"/>
    <property type="evidence" value="ECO:0000314"/>
    <property type="project" value="MGI"/>
</dbReference>
<dbReference type="GO" id="GO:0003682">
    <property type="term" value="F:chromatin binding"/>
    <property type="evidence" value="ECO:0000314"/>
    <property type="project" value="MGI"/>
</dbReference>
<dbReference type="GO" id="GO:0140954">
    <property type="term" value="F:histone H3K36 dimethyltransferase activity"/>
    <property type="evidence" value="ECO:0007669"/>
    <property type="project" value="UniProtKB-EC"/>
</dbReference>
<dbReference type="GO" id="GO:0046975">
    <property type="term" value="F:histone H3K36 methyltransferase activity"/>
    <property type="evidence" value="ECO:0000250"/>
    <property type="project" value="UniProtKB"/>
</dbReference>
<dbReference type="GO" id="GO:0140955">
    <property type="term" value="F:histone H3K36 trimethyltransferase activity"/>
    <property type="evidence" value="ECO:0000314"/>
    <property type="project" value="MGI"/>
</dbReference>
<dbReference type="GO" id="GO:0042054">
    <property type="term" value="F:histone methyltransferase activity"/>
    <property type="evidence" value="ECO:0000314"/>
    <property type="project" value="MGI"/>
</dbReference>
<dbReference type="GO" id="GO:0043565">
    <property type="term" value="F:sequence-specific DNA binding"/>
    <property type="evidence" value="ECO:0000314"/>
    <property type="project" value="MGI"/>
</dbReference>
<dbReference type="GO" id="GO:0008270">
    <property type="term" value="F:zinc ion binding"/>
    <property type="evidence" value="ECO:0007669"/>
    <property type="project" value="UniProtKB-KW"/>
</dbReference>
<dbReference type="GO" id="GO:0003289">
    <property type="term" value="P:atrial septum primum morphogenesis"/>
    <property type="evidence" value="ECO:0000315"/>
    <property type="project" value="MGI"/>
</dbReference>
<dbReference type="GO" id="GO:0003290">
    <property type="term" value="P:atrial septum secundum morphogenesis"/>
    <property type="evidence" value="ECO:0000315"/>
    <property type="project" value="MGI"/>
</dbReference>
<dbReference type="GO" id="GO:0060348">
    <property type="term" value="P:bone development"/>
    <property type="evidence" value="ECO:0000315"/>
    <property type="project" value="MGI"/>
</dbReference>
<dbReference type="GO" id="GO:0003149">
    <property type="term" value="P:membranous septum morphogenesis"/>
    <property type="evidence" value="ECO:0000315"/>
    <property type="project" value="MGI"/>
</dbReference>
<dbReference type="GO" id="GO:0032259">
    <property type="term" value="P:methylation"/>
    <property type="evidence" value="ECO:0007669"/>
    <property type="project" value="UniProtKB-KW"/>
</dbReference>
<dbReference type="GO" id="GO:0000122">
    <property type="term" value="P:negative regulation of transcription by RNA polymerase II"/>
    <property type="evidence" value="ECO:0000316"/>
    <property type="project" value="MGI"/>
</dbReference>
<dbReference type="GO" id="GO:0048298">
    <property type="term" value="P:positive regulation of isotype switching to IgA isotypes"/>
    <property type="evidence" value="ECO:0000315"/>
    <property type="project" value="MGI"/>
</dbReference>
<dbReference type="GO" id="GO:0006355">
    <property type="term" value="P:regulation of DNA-templated transcription"/>
    <property type="evidence" value="ECO:0000315"/>
    <property type="project" value="MGI"/>
</dbReference>
<dbReference type="GO" id="GO:2001032">
    <property type="term" value="P:regulation of double-strand break repair via nonhomologous end joining"/>
    <property type="evidence" value="ECO:0000315"/>
    <property type="project" value="MGI"/>
</dbReference>
<dbReference type="GO" id="GO:0070201">
    <property type="term" value="P:regulation of establishment of protein localization"/>
    <property type="evidence" value="ECO:0000315"/>
    <property type="project" value="MGI"/>
</dbReference>
<dbReference type="CDD" id="cd21991">
    <property type="entry name" value="HMG-box_NSD2"/>
    <property type="match status" value="1"/>
</dbReference>
<dbReference type="CDD" id="cd15648">
    <property type="entry name" value="PHD1_NSD1_2"/>
    <property type="match status" value="1"/>
</dbReference>
<dbReference type="CDD" id="cd15651">
    <property type="entry name" value="PHD2_NSD2"/>
    <property type="match status" value="1"/>
</dbReference>
<dbReference type="CDD" id="cd15654">
    <property type="entry name" value="PHD3_NSD2"/>
    <property type="match status" value="1"/>
</dbReference>
<dbReference type="CDD" id="cd15660">
    <property type="entry name" value="PHD5_NSD2"/>
    <property type="match status" value="1"/>
</dbReference>
<dbReference type="CDD" id="cd20162">
    <property type="entry name" value="PWWP_NSD2_rpt1"/>
    <property type="match status" value="1"/>
</dbReference>
<dbReference type="CDD" id="cd20165">
    <property type="entry name" value="PWWP_NSD2_rpt2"/>
    <property type="match status" value="1"/>
</dbReference>
<dbReference type="CDD" id="cd19211">
    <property type="entry name" value="SET_NSD2"/>
    <property type="match status" value="1"/>
</dbReference>
<dbReference type="FunFam" id="2.170.270.10:FF:000002">
    <property type="entry name" value="Histone-lysine N-methyltransferase"/>
    <property type="match status" value="1"/>
</dbReference>
<dbReference type="FunFam" id="2.30.30.140:FF:000004">
    <property type="entry name" value="Histone-lysine N-methyltransferase"/>
    <property type="match status" value="1"/>
</dbReference>
<dbReference type="FunFam" id="3.30.40.10:FF:000025">
    <property type="entry name" value="Histone-lysine N-methyltransferase"/>
    <property type="match status" value="1"/>
</dbReference>
<dbReference type="FunFam" id="3.30.40.10:FF:000093">
    <property type="entry name" value="Histone-lysine N-methyltransferase"/>
    <property type="match status" value="1"/>
</dbReference>
<dbReference type="FunFam" id="3.30.40.10:FF:001229">
    <property type="entry name" value="Histone-lysine N-methyltransferase"/>
    <property type="match status" value="1"/>
</dbReference>
<dbReference type="FunFam" id="1.10.30.10:FF:000024">
    <property type="entry name" value="Histone-lysine N-methyltransferase NSD2"/>
    <property type="match status" value="1"/>
</dbReference>
<dbReference type="FunFam" id="2.30.30.140:FF:000057">
    <property type="entry name" value="Histone-lysine N-methyltransferase NSD2"/>
    <property type="match status" value="1"/>
</dbReference>
<dbReference type="FunFam" id="3.30.40.10:FF:000153">
    <property type="entry name" value="Histone-lysine N-methyltransferase NSD2"/>
    <property type="match status" value="1"/>
</dbReference>
<dbReference type="Gene3D" id="2.30.30.140">
    <property type="match status" value="2"/>
</dbReference>
<dbReference type="Gene3D" id="1.10.30.10">
    <property type="entry name" value="High mobility group box domain"/>
    <property type="match status" value="1"/>
</dbReference>
<dbReference type="Gene3D" id="2.170.270.10">
    <property type="entry name" value="SET domain"/>
    <property type="match status" value="1"/>
</dbReference>
<dbReference type="Gene3D" id="3.30.40.10">
    <property type="entry name" value="Zinc/RING finger domain, C3HC4 (zinc finger)"/>
    <property type="match status" value="4"/>
</dbReference>
<dbReference type="InterPro" id="IPR006560">
    <property type="entry name" value="AWS_dom"/>
</dbReference>
<dbReference type="InterPro" id="IPR041306">
    <property type="entry name" value="C5HCH"/>
</dbReference>
<dbReference type="InterPro" id="IPR047443">
    <property type="entry name" value="HMG-box_NSD2"/>
</dbReference>
<dbReference type="InterPro" id="IPR009071">
    <property type="entry name" value="HMG_box_dom"/>
</dbReference>
<dbReference type="InterPro" id="IPR036910">
    <property type="entry name" value="HMG_box_dom_sf"/>
</dbReference>
<dbReference type="InterPro" id="IPR055198">
    <property type="entry name" value="NSD_PHD"/>
</dbReference>
<dbReference type="InterPro" id="IPR047426">
    <property type="entry name" value="PHD1_NSD1_2"/>
</dbReference>
<dbReference type="InterPro" id="IPR047439">
    <property type="entry name" value="PHD2_NSD2"/>
</dbReference>
<dbReference type="InterPro" id="IPR047441">
    <property type="entry name" value="PHD3_NSD2"/>
</dbReference>
<dbReference type="InterPro" id="IPR047442">
    <property type="entry name" value="PHD5_NSD2"/>
</dbReference>
<dbReference type="InterPro" id="IPR055197">
    <property type="entry name" value="PHDvar_NSD"/>
</dbReference>
<dbReference type="InterPro" id="IPR003616">
    <property type="entry name" value="Post-SET_dom"/>
</dbReference>
<dbReference type="InterPro" id="IPR000313">
    <property type="entry name" value="PWWP_dom"/>
</dbReference>
<dbReference type="InterPro" id="IPR047434">
    <property type="entry name" value="PWWP_NSD2_rpt1"/>
</dbReference>
<dbReference type="InterPro" id="IPR047435">
    <property type="entry name" value="PWWP_NSD2_rpt2"/>
</dbReference>
<dbReference type="InterPro" id="IPR050777">
    <property type="entry name" value="SET2_Histone-Lys_MeTrsfase"/>
</dbReference>
<dbReference type="InterPro" id="IPR001214">
    <property type="entry name" value="SET_dom"/>
</dbReference>
<dbReference type="InterPro" id="IPR046341">
    <property type="entry name" value="SET_dom_sf"/>
</dbReference>
<dbReference type="InterPro" id="IPR047437">
    <property type="entry name" value="SET_NSD2"/>
</dbReference>
<dbReference type="InterPro" id="IPR019786">
    <property type="entry name" value="Zinc_finger_PHD-type_CS"/>
</dbReference>
<dbReference type="InterPro" id="IPR011011">
    <property type="entry name" value="Znf_FYVE_PHD"/>
</dbReference>
<dbReference type="InterPro" id="IPR001965">
    <property type="entry name" value="Znf_PHD"/>
</dbReference>
<dbReference type="InterPro" id="IPR019787">
    <property type="entry name" value="Znf_PHD-finger"/>
</dbReference>
<dbReference type="InterPro" id="IPR001841">
    <property type="entry name" value="Znf_RING"/>
</dbReference>
<dbReference type="InterPro" id="IPR013083">
    <property type="entry name" value="Znf_RING/FYVE/PHD"/>
</dbReference>
<dbReference type="PANTHER" id="PTHR22884">
    <property type="entry name" value="SET DOMAIN PROTEINS"/>
    <property type="match status" value="1"/>
</dbReference>
<dbReference type="Pfam" id="PF17907">
    <property type="entry name" value="AWS"/>
    <property type="match status" value="1"/>
</dbReference>
<dbReference type="Pfam" id="PF17982">
    <property type="entry name" value="C5HCH"/>
    <property type="match status" value="1"/>
</dbReference>
<dbReference type="Pfam" id="PF00505">
    <property type="entry name" value="HMG_box"/>
    <property type="match status" value="1"/>
</dbReference>
<dbReference type="Pfam" id="PF00628">
    <property type="entry name" value="PHD"/>
    <property type="match status" value="1"/>
</dbReference>
<dbReference type="Pfam" id="PF23011">
    <property type="entry name" value="PHD-1st_NSD"/>
    <property type="match status" value="1"/>
</dbReference>
<dbReference type="Pfam" id="PF22908">
    <property type="entry name" value="PHD_NSD"/>
    <property type="match status" value="1"/>
</dbReference>
<dbReference type="Pfam" id="PF23004">
    <property type="entry name" value="PHDvar_NSD"/>
    <property type="match status" value="1"/>
</dbReference>
<dbReference type="Pfam" id="PF00855">
    <property type="entry name" value="PWWP"/>
    <property type="match status" value="2"/>
</dbReference>
<dbReference type="Pfam" id="PF00856">
    <property type="entry name" value="SET"/>
    <property type="match status" value="1"/>
</dbReference>
<dbReference type="SMART" id="SM00570">
    <property type="entry name" value="AWS"/>
    <property type="match status" value="1"/>
</dbReference>
<dbReference type="SMART" id="SM00398">
    <property type="entry name" value="HMG"/>
    <property type="match status" value="1"/>
</dbReference>
<dbReference type="SMART" id="SM00249">
    <property type="entry name" value="PHD"/>
    <property type="match status" value="4"/>
</dbReference>
<dbReference type="SMART" id="SM00508">
    <property type="entry name" value="PostSET"/>
    <property type="match status" value="1"/>
</dbReference>
<dbReference type="SMART" id="SM00293">
    <property type="entry name" value="PWWP"/>
    <property type="match status" value="2"/>
</dbReference>
<dbReference type="SMART" id="SM00317">
    <property type="entry name" value="SET"/>
    <property type="match status" value="1"/>
</dbReference>
<dbReference type="SUPFAM" id="SSF57903">
    <property type="entry name" value="FYVE/PHD zinc finger"/>
    <property type="match status" value="3"/>
</dbReference>
<dbReference type="SUPFAM" id="SSF47095">
    <property type="entry name" value="HMG-box"/>
    <property type="match status" value="1"/>
</dbReference>
<dbReference type="SUPFAM" id="SSF82199">
    <property type="entry name" value="SET domain"/>
    <property type="match status" value="1"/>
</dbReference>
<dbReference type="SUPFAM" id="SSF63748">
    <property type="entry name" value="Tudor/PWWP/MBT"/>
    <property type="match status" value="2"/>
</dbReference>
<dbReference type="PROSITE" id="PS51215">
    <property type="entry name" value="AWS"/>
    <property type="match status" value="1"/>
</dbReference>
<dbReference type="PROSITE" id="PS50118">
    <property type="entry name" value="HMG_BOX_2"/>
    <property type="match status" value="1"/>
</dbReference>
<dbReference type="PROSITE" id="PS50868">
    <property type="entry name" value="POST_SET"/>
    <property type="match status" value="1"/>
</dbReference>
<dbReference type="PROSITE" id="PS50812">
    <property type="entry name" value="PWWP"/>
    <property type="match status" value="2"/>
</dbReference>
<dbReference type="PROSITE" id="PS50280">
    <property type="entry name" value="SET"/>
    <property type="match status" value="1"/>
</dbReference>
<dbReference type="PROSITE" id="PS01359">
    <property type="entry name" value="ZF_PHD_1"/>
    <property type="match status" value="2"/>
</dbReference>
<dbReference type="PROSITE" id="PS50016">
    <property type="entry name" value="ZF_PHD_2"/>
    <property type="match status" value="2"/>
</dbReference>
<reference key="1">
    <citation type="journal article" date="2008" name="Mol. Cell. Biol.">
        <title>Multiple-myeloma-related WHSC1/MMSET isoform RE-IIBP is a histone methyltransferase with transcriptional repression activity.</title>
        <authorList>
            <person name="Kim J.Y."/>
            <person name="Kee H.J."/>
            <person name="Choe N.W."/>
            <person name="Kim S.M."/>
            <person name="Eom G.H."/>
            <person name="Baek H.J."/>
            <person name="Kook H."/>
            <person name="Kook H."/>
            <person name="Seo S.B."/>
        </authorList>
    </citation>
    <scope>NUCLEOTIDE SEQUENCE [MRNA] (ISOFORM RE-IIBP)</scope>
    <scope>FUNCTION (ISOFORM RE-IIBP)</scope>
    <scope>MUTAGENESIS OF ARG-1138 AND CYS-1144</scope>
</reference>
<reference key="2">
    <citation type="journal article" date="2003" name="DNA Res.">
        <title>Prediction of the coding sequences of mouse homologues of KIAA gene: III. The complete nucleotide sequences of 500 mouse KIAA-homologous cDNAs identified by screening of terminal sequences of cDNA clones randomly sampled from size-fractionated libraries.</title>
        <authorList>
            <person name="Okazaki N."/>
            <person name="Kikuno R."/>
            <person name="Ohara R."/>
            <person name="Inamoto S."/>
            <person name="Koseki H."/>
            <person name="Hiraoka S."/>
            <person name="Saga Y."/>
            <person name="Nagase T."/>
            <person name="Ohara O."/>
            <person name="Koga H."/>
        </authorList>
    </citation>
    <scope>NUCLEOTIDE SEQUENCE [LARGE SCALE MRNA] (ISOFORM 3)</scope>
    <source>
        <tissue>Embryonic tail</tissue>
    </source>
</reference>
<reference key="3">
    <citation type="journal article" date="2009" name="PLoS Biol.">
        <title>Lineage-specific biology revealed by a finished genome assembly of the mouse.</title>
        <authorList>
            <person name="Church D.M."/>
            <person name="Goodstadt L."/>
            <person name="Hillier L.W."/>
            <person name="Zody M.C."/>
            <person name="Goldstein S."/>
            <person name="She X."/>
            <person name="Bult C.J."/>
            <person name="Agarwala R."/>
            <person name="Cherry J.L."/>
            <person name="DiCuccio M."/>
            <person name="Hlavina W."/>
            <person name="Kapustin Y."/>
            <person name="Meric P."/>
            <person name="Maglott D."/>
            <person name="Birtle Z."/>
            <person name="Marques A.C."/>
            <person name="Graves T."/>
            <person name="Zhou S."/>
            <person name="Teague B."/>
            <person name="Potamousis K."/>
            <person name="Churas C."/>
            <person name="Place M."/>
            <person name="Herschleb J."/>
            <person name="Runnheim R."/>
            <person name="Forrest D."/>
            <person name="Amos-Landgraf J."/>
            <person name="Schwartz D.C."/>
            <person name="Cheng Z."/>
            <person name="Lindblad-Toh K."/>
            <person name="Eichler E.E."/>
            <person name="Ponting C.P."/>
        </authorList>
    </citation>
    <scope>NUCLEOTIDE SEQUENCE [LARGE SCALE GENOMIC DNA]</scope>
    <source>
        <strain>C57BL/6J</strain>
    </source>
</reference>
<reference key="4">
    <citation type="journal article" date="2005" name="Science">
        <title>The transcriptional landscape of the mammalian genome.</title>
        <authorList>
            <person name="Carninci P."/>
            <person name="Kasukawa T."/>
            <person name="Katayama S."/>
            <person name="Gough J."/>
            <person name="Frith M.C."/>
            <person name="Maeda N."/>
            <person name="Oyama R."/>
            <person name="Ravasi T."/>
            <person name="Lenhard B."/>
            <person name="Wells C."/>
            <person name="Kodzius R."/>
            <person name="Shimokawa K."/>
            <person name="Bajic V.B."/>
            <person name="Brenner S.E."/>
            <person name="Batalov S."/>
            <person name="Forrest A.R."/>
            <person name="Zavolan M."/>
            <person name="Davis M.J."/>
            <person name="Wilming L.G."/>
            <person name="Aidinis V."/>
            <person name="Allen J.E."/>
            <person name="Ambesi-Impiombato A."/>
            <person name="Apweiler R."/>
            <person name="Aturaliya R.N."/>
            <person name="Bailey T.L."/>
            <person name="Bansal M."/>
            <person name="Baxter L."/>
            <person name="Beisel K.W."/>
            <person name="Bersano T."/>
            <person name="Bono H."/>
            <person name="Chalk A.M."/>
            <person name="Chiu K.P."/>
            <person name="Choudhary V."/>
            <person name="Christoffels A."/>
            <person name="Clutterbuck D.R."/>
            <person name="Crowe M.L."/>
            <person name="Dalla E."/>
            <person name="Dalrymple B.P."/>
            <person name="de Bono B."/>
            <person name="Della Gatta G."/>
            <person name="di Bernardo D."/>
            <person name="Down T."/>
            <person name="Engstrom P."/>
            <person name="Fagiolini M."/>
            <person name="Faulkner G."/>
            <person name="Fletcher C.F."/>
            <person name="Fukushima T."/>
            <person name="Furuno M."/>
            <person name="Futaki S."/>
            <person name="Gariboldi M."/>
            <person name="Georgii-Hemming P."/>
            <person name="Gingeras T.R."/>
            <person name="Gojobori T."/>
            <person name="Green R.E."/>
            <person name="Gustincich S."/>
            <person name="Harbers M."/>
            <person name="Hayashi Y."/>
            <person name="Hensch T.K."/>
            <person name="Hirokawa N."/>
            <person name="Hill D."/>
            <person name="Huminiecki L."/>
            <person name="Iacono M."/>
            <person name="Ikeo K."/>
            <person name="Iwama A."/>
            <person name="Ishikawa T."/>
            <person name="Jakt M."/>
            <person name="Kanapin A."/>
            <person name="Katoh M."/>
            <person name="Kawasawa Y."/>
            <person name="Kelso J."/>
            <person name="Kitamura H."/>
            <person name="Kitano H."/>
            <person name="Kollias G."/>
            <person name="Krishnan S.P."/>
            <person name="Kruger A."/>
            <person name="Kummerfeld S.K."/>
            <person name="Kurochkin I.V."/>
            <person name="Lareau L.F."/>
            <person name="Lazarevic D."/>
            <person name="Lipovich L."/>
            <person name="Liu J."/>
            <person name="Liuni S."/>
            <person name="McWilliam S."/>
            <person name="Madan Babu M."/>
            <person name="Madera M."/>
            <person name="Marchionni L."/>
            <person name="Matsuda H."/>
            <person name="Matsuzawa S."/>
            <person name="Miki H."/>
            <person name="Mignone F."/>
            <person name="Miyake S."/>
            <person name="Morris K."/>
            <person name="Mottagui-Tabar S."/>
            <person name="Mulder N."/>
            <person name="Nakano N."/>
            <person name="Nakauchi H."/>
            <person name="Ng P."/>
            <person name="Nilsson R."/>
            <person name="Nishiguchi S."/>
            <person name="Nishikawa S."/>
            <person name="Nori F."/>
            <person name="Ohara O."/>
            <person name="Okazaki Y."/>
            <person name="Orlando V."/>
            <person name="Pang K.C."/>
            <person name="Pavan W.J."/>
            <person name="Pavesi G."/>
            <person name="Pesole G."/>
            <person name="Petrovsky N."/>
            <person name="Piazza S."/>
            <person name="Reed J."/>
            <person name="Reid J.F."/>
            <person name="Ring B.Z."/>
            <person name="Ringwald M."/>
            <person name="Rost B."/>
            <person name="Ruan Y."/>
            <person name="Salzberg S.L."/>
            <person name="Sandelin A."/>
            <person name="Schneider C."/>
            <person name="Schoenbach C."/>
            <person name="Sekiguchi K."/>
            <person name="Semple C.A."/>
            <person name="Seno S."/>
            <person name="Sessa L."/>
            <person name="Sheng Y."/>
            <person name="Shibata Y."/>
            <person name="Shimada H."/>
            <person name="Shimada K."/>
            <person name="Silva D."/>
            <person name="Sinclair B."/>
            <person name="Sperling S."/>
            <person name="Stupka E."/>
            <person name="Sugiura K."/>
            <person name="Sultana R."/>
            <person name="Takenaka Y."/>
            <person name="Taki K."/>
            <person name="Tammoja K."/>
            <person name="Tan S.L."/>
            <person name="Tang S."/>
            <person name="Taylor M.S."/>
            <person name="Tegner J."/>
            <person name="Teichmann S.A."/>
            <person name="Ueda H.R."/>
            <person name="van Nimwegen E."/>
            <person name="Verardo R."/>
            <person name="Wei C.L."/>
            <person name="Yagi K."/>
            <person name="Yamanishi H."/>
            <person name="Zabarovsky E."/>
            <person name="Zhu S."/>
            <person name="Zimmer A."/>
            <person name="Hide W."/>
            <person name="Bult C."/>
            <person name="Grimmond S.M."/>
            <person name="Teasdale R.D."/>
            <person name="Liu E.T."/>
            <person name="Brusic V."/>
            <person name="Quackenbush J."/>
            <person name="Wahlestedt C."/>
            <person name="Mattick J.S."/>
            <person name="Hume D.A."/>
            <person name="Kai C."/>
            <person name="Sasaki D."/>
            <person name="Tomaru Y."/>
            <person name="Fukuda S."/>
            <person name="Kanamori-Katayama M."/>
            <person name="Suzuki M."/>
            <person name="Aoki J."/>
            <person name="Arakawa T."/>
            <person name="Iida J."/>
            <person name="Imamura K."/>
            <person name="Itoh M."/>
            <person name="Kato T."/>
            <person name="Kawaji H."/>
            <person name="Kawagashira N."/>
            <person name="Kawashima T."/>
            <person name="Kojima M."/>
            <person name="Kondo S."/>
            <person name="Konno H."/>
            <person name="Nakano K."/>
            <person name="Ninomiya N."/>
            <person name="Nishio T."/>
            <person name="Okada M."/>
            <person name="Plessy C."/>
            <person name="Shibata K."/>
            <person name="Shiraki T."/>
            <person name="Suzuki S."/>
            <person name="Tagami M."/>
            <person name="Waki K."/>
            <person name="Watahiki A."/>
            <person name="Okamura-Oho Y."/>
            <person name="Suzuki H."/>
            <person name="Kawai J."/>
            <person name="Hayashizaki Y."/>
        </authorList>
    </citation>
    <scope>NUCLEOTIDE SEQUENCE [LARGE SCALE MRNA] OF 446-1365 (ISOFORM 1)</scope>
    <source>
        <strain>C57BL/6J</strain>
        <tissue>Adrenal gland</tissue>
    </source>
</reference>
<reference key="5">
    <citation type="journal article" date="2004" name="Genome Res.">
        <title>The status, quality, and expansion of the NIH full-length cDNA project: the Mammalian Gene Collection (MGC).</title>
        <authorList>
            <consortium name="The MGC Project Team"/>
        </authorList>
    </citation>
    <scope>NUCLEOTIDE SEQUENCE [LARGE SCALE MRNA] OF 516-1365 (ISOFORM 2)</scope>
    <source>
        <strain>FVB/N</strain>
        <tissue>Limb</tissue>
        <tissue>Mammary tumor</tissue>
    </source>
</reference>
<reference key="6">
    <citation type="journal article" date="1998" name="Hum. Mol. Genet.">
        <title>WHSC1, a 90 kb SET domain-containing gene, expressed in early development and homologous to a Drosophila dysmorphy gene maps in the Wolf-Hirschhorn syndrome critical region and is fused to IgH in t(4;14) multiple myeloma.</title>
        <authorList>
            <person name="Stec I."/>
            <person name="Wright T.J."/>
            <person name="van Ommen G.-J.B."/>
            <person name="de Boer P.A."/>
            <person name="van Haeringen A."/>
            <person name="Moorman A.F.M."/>
            <person name="Altherr M.R."/>
            <person name="den Dunnen J.T."/>
        </authorList>
    </citation>
    <scope>DEVELOPMENTAL STAGE</scope>
</reference>
<reference key="7">
    <citation type="journal article" date="1998" name="Hum. Mol. Genet.">
        <authorList>
            <person name="Stec I."/>
            <person name="Wright T.J."/>
            <person name="van Ommen G.-J.B."/>
            <person name="de Boer P.A."/>
            <person name="van Haeringen A."/>
            <person name="Moorman A.F.M."/>
            <person name="Altherr M.R."/>
            <person name="den Dunnen J.T."/>
        </authorList>
    </citation>
    <scope>ERRATUM OF PUBMED:9618163</scope>
</reference>
<reference key="8">
    <citation type="journal article" date="2009" name="Nature">
        <title>A histone H3 lysine 36 trimethyltransferase links Nkx2-5 to Wolf-Hirschhorn syndrome.</title>
        <authorList>
            <person name="Nimura K."/>
            <person name="Ura K."/>
            <person name="Shiratori H."/>
            <person name="Ikawa M."/>
            <person name="Okabe M."/>
            <person name="Schwartz R.J."/>
            <person name="Kaneda Y."/>
        </authorList>
    </citation>
    <scope>FUNCTION</scope>
    <scope>CATALYTIC ACTIVITY</scope>
    <scope>INTERACTION WITH SALL1; SALL4; NANOG; HDAC1; NKX2-5 AND OGT</scope>
    <scope>SUBCELLULAR LOCATION</scope>
    <scope>DEVELOPMENTAL STAGE</scope>
    <scope>DISRUPTION PHENOTYPE</scope>
    <scope>MUTAGENESIS OF HIS-1142</scope>
</reference>
<reference key="9">
    <citation type="journal article" date="2010" name="Cell">
        <title>A tissue-specific atlas of mouse protein phosphorylation and expression.</title>
        <authorList>
            <person name="Huttlin E.L."/>
            <person name="Jedrychowski M.P."/>
            <person name="Elias J.E."/>
            <person name="Goswami T."/>
            <person name="Rad R."/>
            <person name="Beausoleil S.A."/>
            <person name="Villen J."/>
            <person name="Haas W."/>
            <person name="Sowa M.E."/>
            <person name="Gygi S.P."/>
        </authorList>
    </citation>
    <scope>PHOSPHORYLATION [LARGE SCALE ANALYSIS] AT THR-110 AND SER-121</scope>
    <scope>IDENTIFICATION BY MASS SPECTROMETRY [LARGE SCALE ANALYSIS]</scope>
    <source>
        <tissue>Lung</tissue>
        <tissue>Spleen</tissue>
        <tissue>Testis</tissue>
    </source>
</reference>
<reference key="10">
    <citation type="journal article" date="2013" name="J. Immunol.">
        <title>The histone methyltransferase MMSET regulates class switch recombination.</title>
        <authorList>
            <person name="Pei H."/>
            <person name="Wu X."/>
            <person name="Liu T."/>
            <person name="Yu K."/>
            <person name="Jelinek D.F."/>
            <person name="Lou Z."/>
        </authorList>
    </citation>
    <scope>FUNCTION</scope>
    <scope>SUBCELLULAR LOCATION</scope>
    <scope>MUTAGENESIS OF PHE-1117</scope>
</reference>
<reference key="11">
    <citation type="journal article" date="2020" name="FEBS Lett.">
        <title>The catalytic domain of the histone methyltransferase NSD2/MMSET is required for the generation of B1 cells in mice.</title>
        <authorList>
            <person name="Dobenecker M.W."/>
            <person name="Marcello J."/>
            <person name="Becker A."/>
            <person name="Rudensky E."/>
            <person name="Bhanu N.V."/>
            <person name="Carrol T."/>
            <person name="Garcia B.A."/>
            <person name="Prinjha R."/>
            <person name="Yurchenko V."/>
            <person name="Tarakhovsky A."/>
        </authorList>
    </citation>
    <scope>FUNCTION</scope>
    <scope>CATALYTIC ACTIVITY</scope>
    <scope>TISSUE SPECIFICITY</scope>
    <scope>INDUCTION</scope>
</reference>
<reference key="12">
    <citation type="journal article" date="2020" name="J. Exp. Med.">
        <title>Histone methyltransferase Nsd2 is required for follicular helper T cell differentiation.</title>
        <authorList>
            <person name="Long X."/>
            <person name="Zhang L."/>
            <person name="Zhang Y."/>
            <person name="Min M."/>
            <person name="Lin B."/>
            <person name="Chen J."/>
            <person name="Ma X."/>
            <person name="Zhai S."/>
            <person name="Cai Z."/>
            <person name="Liu Y."/>
            <person name="Lu Y."/>
            <person name="Che N."/>
            <person name="Tan W."/>
            <person name="Qin J."/>
            <person name="Wang X."/>
        </authorList>
    </citation>
    <scope>FUNCTION</scope>
    <scope>CATALYTIC ACTIVITY</scope>
    <scope>INDUCTION</scope>
    <scope>DISRUPTION PHENOTYPE</scope>
</reference>